<name>PGP14_CAEEL</name>
<evidence type="ECO:0000255" key="1"/>
<evidence type="ECO:0000255" key="2">
    <source>
        <dbReference type="PROSITE-ProRule" id="PRU00434"/>
    </source>
</evidence>
<evidence type="ECO:0000255" key="3">
    <source>
        <dbReference type="PROSITE-ProRule" id="PRU00441"/>
    </source>
</evidence>
<evidence type="ECO:0000256" key="4">
    <source>
        <dbReference type="SAM" id="MobiDB-lite"/>
    </source>
</evidence>
<evidence type="ECO:0000269" key="5">
    <source>
    </source>
</evidence>
<evidence type="ECO:0000305" key="6"/>
<evidence type="ECO:0000312" key="7">
    <source>
        <dbReference type="EMBL" id="AAR89639.1"/>
    </source>
</evidence>
<evidence type="ECO:0000312" key="8">
    <source>
        <dbReference type="Proteomes" id="UP000001940"/>
    </source>
</evidence>
<evidence type="ECO:0000312" key="9">
    <source>
        <dbReference type="WormBase" id="F22E10.3"/>
    </source>
</evidence>
<gene>
    <name evidence="9" type="primary">pgp-14</name>
    <name evidence="7" type="synonym">XN364</name>
    <name evidence="9" type="ORF">F22E10.3</name>
</gene>
<keyword id="KW-0067">ATP-binding</keyword>
<keyword id="KW-1003">Cell membrane</keyword>
<keyword id="KW-0472">Membrane</keyword>
<keyword id="KW-0547">Nucleotide-binding</keyword>
<keyword id="KW-1185">Reference proteome</keyword>
<keyword id="KW-0677">Repeat</keyword>
<keyword id="KW-1278">Translocase</keyword>
<keyword id="KW-0812">Transmembrane</keyword>
<keyword id="KW-1133">Transmembrane helix</keyword>
<protein>
    <recommendedName>
        <fullName evidence="6">P-glycoprotein 14</fullName>
        <ecNumber evidence="6">7.6.-.-</ecNumber>
    </recommendedName>
</protein>
<reference evidence="8" key="1">
    <citation type="journal article" date="1998" name="Science">
        <title>Genome sequence of the nematode C. elegans: a platform for investigating biology.</title>
        <authorList>
            <consortium name="The C. elegans sequencing consortium"/>
        </authorList>
    </citation>
    <scope>NUCLEOTIDE SEQUENCE [LARGE SCALE GENOMIC DNA]</scope>
    <source>
        <strain evidence="8">Bristol N2</strain>
    </source>
</reference>
<reference evidence="7" key="2">
    <citation type="submission" date="2004-01" db="EMBL/GenBank/DDBJ databases">
        <title>The Caenorhabditis elegans transcriptome project, a complementary view of the genome.</title>
        <authorList>
            <person name="Kohara Y."/>
            <person name="Shin-i T."/>
            <person name="Suzuki Y."/>
            <person name="Sugano S."/>
            <person name="Thierry-Mieg D."/>
            <person name="Thierry-Mieg J."/>
        </authorList>
    </citation>
    <scope>NUCLEOTIDE SEQUENCE [LARGE SCALE MRNA]</scope>
</reference>
<reference key="3">
    <citation type="journal article" date="2023" name="PLoS Genet.">
        <title>PGP-14 establishes a polar lipid permeability barrier within the C. elegans pharyngeal cuticle.</title>
        <authorList>
            <person name="Kamal M."/>
            <person name="Tokmakjian L."/>
            <person name="Knox J."/>
            <person name="Han D."/>
            <person name="Moshiri H."/>
            <person name="Magomedova L."/>
            <person name="Nguyen K.C."/>
            <person name="Zheng H."/>
            <person name="Burns A.R."/>
            <person name="Cooke B."/>
            <person name="Lacoste J."/>
            <person name="Yeo M."/>
            <person name="Hall D.H."/>
            <person name="Cummins C.L."/>
            <person name="Roy P.J."/>
        </authorList>
    </citation>
    <scope>FUNCTION</scope>
    <scope>SUBCELLULAR LOCATION</scope>
    <scope>TISSUE SPECIFICITY</scope>
    <scope>DEVELOPMENTAL STAGE</scope>
</reference>
<proteinExistence type="evidence at transcript level"/>
<comment type="function">
    <text evidence="5">Contributes to the establishment of a polar lipid barrier to block small molecule passage into the pharyngeal cuticle (PubMed:37930961). Probably exports polar lipids into the developing pharyngeal cuticle to protect against xenobiotic insult (PubMed:37930961). Likely functions in the same pathway as sphingomyelin synthase sms-5 (PubMed:37930961).</text>
</comment>
<comment type="subcellular location">
    <subcellularLocation>
        <location evidence="5">Apical cell membrane</location>
        <topology evidence="1">Multi-pass membrane protein</topology>
    </subcellularLocation>
</comment>
<comment type="tissue specificity">
    <text evidence="5">Expressed in pharyngeal epithelial cells that surround the anterior pharyngeal cuticle (PubMed:37930961). Shares same expression pattern as sms-5 (PubMed:37930961).</text>
</comment>
<comment type="developmental stage">
    <text evidence="5">Highest expression during new anterior pharyngeal cuticle synthesis.</text>
</comment>
<comment type="similarity">
    <text evidence="6">Belongs to the ABC transporter superfamily. ABCB family. Multidrug resistance exporter (TC 3.A.1.201) subfamily.</text>
</comment>
<accession>G5EG61</accession>
<sequence length="1327" mass="146895">MAPKDDPDNRGFDDQRRPSQRSTVLAIPALAVNDPKSDPKIASDLPANYVDDDDDAPKMYTPSLLEKILNYALCRGDIANQQLEAQPVSIPGLFRYGKKFDYLLLFIGTICAIISGVSQPILALVSGRVTNALLVYPPTSKQFRNKANENVYIFLGIGIFISITNFIQYMCFQHCCTRVMAQMRHRFVYSVLRQNAGWFDKNHSGTITTKLNDSMERIREGIGDKLGVLLRGFAMLIAAIVVAYIYEWRLASMMLGVAPTCCICMSLLARQMTSTTIKELIGVGKAGSIAEESLMGVRTVQAFNGQEEMVGRYEAELEKGRKFAVWKGFWSGFFGGLFFFWLFSFLGCGMLYGAYLLKVGIITTPGDVFIVVMSMLLGAYFLGLISPHMMVLLNARVSAASIYQTIDRVPKIDPYSKAGKRLQNVVGRVKFENVHFRYPSRKDAKILNGLNLVVEPGTSVALVGHSGCGKSTSVGLLTRLYEPEAGNVTIDGTDVRELNIEWLRNTVGIVQQEPILFNDTIHNNLLIGNPGSTRETMIEVCKMANAHDFIEKMPKGYDTLIGDGGVQLSGGQKQRVAIARTLIRDPKVLLLDEATSALDAQSESIVQSALNNASKGRTTIMIAHRLSTIREADKIVFFEKGVIVEAGNHEELVRLGGRYFDLVKAQQFKADPEATEEFEEEEIDLDDTSRSSRRSSMTSARSGSEAFRRGNSLNDSFSGSKRSAQADAENSAFAANEAAIMAEDGQITAGYLDIFKNAKGNYLYMFLGTVFALIRGLELPALALIFGWVFEGFTFVPYGGRMMHRMAMAVIAFASVGVGVWFSQLASSVLFAVVSENLSMRFRVQSFRNLLYQDASYFDNPAHAPGKLITRLASDAPNIKAVVDARMLQVIYALAAIIANIAIAFIYCWQIGILGTSLILLLAFVMIGLAYKISLMNVEQIQNDDAGRIAIEIIENVKTIQLLTRCELFFDHYQTSSKQQKRSELKKGMIEAINYSLTQSFMYFMMCFTYAVGIRIIYQGDKSSDDTFKGIIAMMLGAVAVMNSAQYFPEFVKAKTAAGMLFNIIYRKPRTGDLMEGDRPEIRGNILFENVKFSYPQRPLQPIMKGLQWTALRGQTVALVGPSGSGKSTNIGMLERFYDVTGGALRIDGQDIRKLSLFHLRTQMALVGQEPRLFAGTIRENVCLGLKDVPLEKINQALELANANRFLANLPAGIDTDVGEKGGQLSGGQKQRIAIARALVRDPKILLLDEATSALDSESERAVQEALDRAREGRTCITIAHRLSSIQNSDLIVYIDKGKVQEAGNHTQLMHQKGRYYKLIKKQDLAV</sequence>
<dbReference type="EC" id="7.6.-.-" evidence="6"/>
<dbReference type="EMBL" id="BX284606">
    <property type="protein sequence ID" value="CAA91801.1"/>
    <property type="molecule type" value="Genomic_DNA"/>
</dbReference>
<dbReference type="EMBL" id="AY519858">
    <property type="protein sequence ID" value="AAR89639.1"/>
    <property type="molecule type" value="mRNA"/>
</dbReference>
<dbReference type="PIR" id="T21268">
    <property type="entry name" value="T21268"/>
</dbReference>
<dbReference type="RefSeq" id="NP_510128.1">
    <property type="nucleotide sequence ID" value="NM_077727.10"/>
</dbReference>
<dbReference type="SMR" id="G5EG61"/>
<dbReference type="FunCoup" id="G5EG61">
    <property type="interactions" value="31"/>
</dbReference>
<dbReference type="STRING" id="6239.F22E10.3.1"/>
<dbReference type="PaxDb" id="6239-F22E10.3"/>
<dbReference type="PeptideAtlas" id="G5EG61"/>
<dbReference type="EnsemblMetazoa" id="F22E10.3.1">
    <property type="protein sequence ID" value="F22E10.3.1"/>
    <property type="gene ID" value="WBGene00004008"/>
</dbReference>
<dbReference type="GeneID" id="181416"/>
<dbReference type="KEGG" id="cel:CELE_F22E10.3"/>
<dbReference type="AGR" id="WB:WBGene00004008"/>
<dbReference type="CTD" id="181416"/>
<dbReference type="WormBase" id="F22E10.3">
    <property type="protein sequence ID" value="CE03262"/>
    <property type="gene ID" value="WBGene00004008"/>
    <property type="gene designation" value="pgp-14"/>
</dbReference>
<dbReference type="eggNOG" id="KOG0055">
    <property type="taxonomic scope" value="Eukaryota"/>
</dbReference>
<dbReference type="GeneTree" id="ENSGT00970000196687"/>
<dbReference type="HOGENOM" id="CLU_000604_17_2_1"/>
<dbReference type="OMA" id="MRHRFVY"/>
<dbReference type="OrthoDB" id="6500128at2759"/>
<dbReference type="Proteomes" id="UP000001940">
    <property type="component" value="Chromosome X"/>
</dbReference>
<dbReference type="Bgee" id="WBGene00004008">
    <property type="expression patterns" value="Expressed in larva and 2 other cell types or tissues"/>
</dbReference>
<dbReference type="GO" id="GO:0016324">
    <property type="term" value="C:apical plasma membrane"/>
    <property type="evidence" value="ECO:0007669"/>
    <property type="project" value="UniProtKB-SubCell"/>
</dbReference>
<dbReference type="GO" id="GO:0016020">
    <property type="term" value="C:membrane"/>
    <property type="evidence" value="ECO:0000318"/>
    <property type="project" value="GO_Central"/>
</dbReference>
<dbReference type="GO" id="GO:0140359">
    <property type="term" value="F:ABC-type transporter activity"/>
    <property type="evidence" value="ECO:0007669"/>
    <property type="project" value="InterPro"/>
</dbReference>
<dbReference type="GO" id="GO:0005524">
    <property type="term" value="F:ATP binding"/>
    <property type="evidence" value="ECO:0007669"/>
    <property type="project" value="UniProtKB-KW"/>
</dbReference>
<dbReference type="GO" id="GO:0016887">
    <property type="term" value="F:ATP hydrolysis activity"/>
    <property type="evidence" value="ECO:0007669"/>
    <property type="project" value="InterPro"/>
</dbReference>
<dbReference type="GO" id="GO:0042626">
    <property type="term" value="F:ATPase-coupled transmembrane transporter activity"/>
    <property type="evidence" value="ECO:0000318"/>
    <property type="project" value="GO_Central"/>
</dbReference>
<dbReference type="GO" id="GO:0093002">
    <property type="term" value="P:response to nematicide"/>
    <property type="evidence" value="ECO:0000270"/>
    <property type="project" value="WormBase"/>
</dbReference>
<dbReference type="GO" id="GO:0055085">
    <property type="term" value="P:transmembrane transport"/>
    <property type="evidence" value="ECO:0000318"/>
    <property type="project" value="GO_Central"/>
</dbReference>
<dbReference type="CDD" id="cd18577">
    <property type="entry name" value="ABC_6TM_Pgp_ABCB1_D1_like"/>
    <property type="match status" value="1"/>
</dbReference>
<dbReference type="CDD" id="cd18578">
    <property type="entry name" value="ABC_6TM_Pgp_ABCB1_D2_like"/>
    <property type="match status" value="1"/>
</dbReference>
<dbReference type="CDD" id="cd03249">
    <property type="entry name" value="ABC_MTABC3_MDL1_MDL2"/>
    <property type="match status" value="2"/>
</dbReference>
<dbReference type="FunFam" id="1.20.1560.10:FF:000087">
    <property type="entry name" value="p-GlycoProtein related"/>
    <property type="match status" value="1"/>
</dbReference>
<dbReference type="FunFam" id="1.20.1560.10:FF:000090">
    <property type="entry name" value="p-GlycoProtein related"/>
    <property type="match status" value="1"/>
</dbReference>
<dbReference type="FunFam" id="1.20.1560.10:FF:000146">
    <property type="entry name" value="p-GlycoProtein related"/>
    <property type="match status" value="1"/>
</dbReference>
<dbReference type="FunFam" id="3.40.50.300:FF:001370">
    <property type="entry name" value="p-GlycoProtein related"/>
    <property type="match status" value="2"/>
</dbReference>
<dbReference type="Gene3D" id="1.20.1560.10">
    <property type="entry name" value="ABC transporter type 1, transmembrane domain"/>
    <property type="match status" value="3"/>
</dbReference>
<dbReference type="Gene3D" id="3.40.50.300">
    <property type="entry name" value="P-loop containing nucleotide triphosphate hydrolases"/>
    <property type="match status" value="2"/>
</dbReference>
<dbReference type="InterPro" id="IPR003593">
    <property type="entry name" value="AAA+_ATPase"/>
</dbReference>
<dbReference type="InterPro" id="IPR011527">
    <property type="entry name" value="ABC1_TM_dom"/>
</dbReference>
<dbReference type="InterPro" id="IPR036640">
    <property type="entry name" value="ABC1_TM_sf"/>
</dbReference>
<dbReference type="InterPro" id="IPR003439">
    <property type="entry name" value="ABC_transporter-like_ATP-bd"/>
</dbReference>
<dbReference type="InterPro" id="IPR017871">
    <property type="entry name" value="ABC_transporter-like_CS"/>
</dbReference>
<dbReference type="InterPro" id="IPR027417">
    <property type="entry name" value="P-loop_NTPase"/>
</dbReference>
<dbReference type="InterPro" id="IPR039421">
    <property type="entry name" value="Type_1_exporter"/>
</dbReference>
<dbReference type="PANTHER" id="PTHR43394">
    <property type="entry name" value="ATP-DEPENDENT PERMEASE MDL1, MITOCHONDRIAL"/>
    <property type="match status" value="1"/>
</dbReference>
<dbReference type="PANTHER" id="PTHR43394:SF27">
    <property type="entry name" value="ATP-DEPENDENT TRANSLOCASE ABCB1-LIKE"/>
    <property type="match status" value="1"/>
</dbReference>
<dbReference type="Pfam" id="PF00664">
    <property type="entry name" value="ABC_membrane"/>
    <property type="match status" value="2"/>
</dbReference>
<dbReference type="Pfam" id="PF00005">
    <property type="entry name" value="ABC_tran"/>
    <property type="match status" value="2"/>
</dbReference>
<dbReference type="SMART" id="SM00382">
    <property type="entry name" value="AAA"/>
    <property type="match status" value="2"/>
</dbReference>
<dbReference type="SUPFAM" id="SSF90123">
    <property type="entry name" value="ABC transporter transmembrane region"/>
    <property type="match status" value="2"/>
</dbReference>
<dbReference type="SUPFAM" id="SSF52540">
    <property type="entry name" value="P-loop containing nucleoside triphosphate hydrolases"/>
    <property type="match status" value="2"/>
</dbReference>
<dbReference type="PROSITE" id="PS50929">
    <property type="entry name" value="ABC_TM1F"/>
    <property type="match status" value="2"/>
</dbReference>
<dbReference type="PROSITE" id="PS00211">
    <property type="entry name" value="ABC_TRANSPORTER_1"/>
    <property type="match status" value="2"/>
</dbReference>
<dbReference type="PROSITE" id="PS50893">
    <property type="entry name" value="ABC_TRANSPORTER_2"/>
    <property type="match status" value="2"/>
</dbReference>
<feature type="chain" id="PRO_0000460490" description="P-glycoprotein 14">
    <location>
        <begin position="1"/>
        <end position="1327"/>
    </location>
</feature>
<feature type="topological domain" description="Cytoplasmic" evidence="6">
    <location>
        <begin position="1"/>
        <end position="104"/>
    </location>
</feature>
<feature type="transmembrane region" description="Helical" evidence="1 3">
    <location>
        <begin position="105"/>
        <end position="125"/>
    </location>
</feature>
<feature type="topological domain" description="Extracellular" evidence="6">
    <location>
        <begin position="126"/>
        <end position="151"/>
    </location>
</feature>
<feature type="transmembrane region" description="Helical" evidence="1 3">
    <location>
        <begin position="152"/>
        <end position="172"/>
    </location>
</feature>
<feature type="topological domain" description="Cytoplasmic" evidence="6">
    <location>
        <begin position="173"/>
        <end position="225"/>
    </location>
</feature>
<feature type="transmembrane region" description="Helical" evidence="1 3">
    <location>
        <begin position="226"/>
        <end position="246"/>
    </location>
</feature>
<feature type="topological domain" description="Extracellular" evidence="6">
    <location>
        <position position="247"/>
    </location>
</feature>
<feature type="transmembrane region" description="Helical" evidence="1 3">
    <location>
        <begin position="248"/>
        <end position="268"/>
    </location>
</feature>
<feature type="topological domain" description="Cytoplasmic" evidence="6">
    <location>
        <begin position="269"/>
        <end position="331"/>
    </location>
</feature>
<feature type="transmembrane region" description="Helical" evidence="1 3">
    <location>
        <begin position="332"/>
        <end position="352"/>
    </location>
</feature>
<feature type="topological domain" description="Extracellular" evidence="6">
    <location>
        <begin position="353"/>
        <end position="364"/>
    </location>
</feature>
<feature type="transmembrane region" description="Helical" evidence="1 3">
    <location>
        <begin position="365"/>
        <end position="385"/>
    </location>
</feature>
<feature type="topological domain" description="Cytoplasmic" evidence="6">
    <location>
        <begin position="386"/>
        <end position="766"/>
    </location>
</feature>
<feature type="transmembrane region" description="Helical" evidence="1 3">
    <location>
        <begin position="767"/>
        <end position="789"/>
    </location>
</feature>
<feature type="topological domain" description="Extracellular" evidence="6">
    <location>
        <begin position="790"/>
        <end position="805"/>
    </location>
</feature>
<feature type="transmembrane region" description="Helical" evidence="1 3">
    <location>
        <begin position="806"/>
        <end position="826"/>
    </location>
</feature>
<feature type="topological domain" description="Cytoplasmic" evidence="6">
    <location>
        <begin position="827"/>
        <end position="886"/>
    </location>
</feature>
<feature type="transmembrane region" description="Helical" evidence="1 3">
    <location>
        <begin position="887"/>
        <end position="907"/>
    </location>
</feature>
<feature type="topological domain" description="Extracellular" evidence="6">
    <location>
        <begin position="908"/>
        <end position="910"/>
    </location>
</feature>
<feature type="transmembrane region" description="Helical" evidence="1 3">
    <location>
        <begin position="911"/>
        <end position="931"/>
    </location>
</feature>
<feature type="topological domain" description="Cytoplasmic" evidence="6">
    <location>
        <begin position="932"/>
        <end position="996"/>
    </location>
</feature>
<feature type="transmembrane region" description="Helical" evidence="1 3">
    <location>
        <begin position="997"/>
        <end position="1017"/>
    </location>
</feature>
<feature type="topological domain" description="Extracellular" evidence="6">
    <location>
        <begin position="1018"/>
        <end position="1030"/>
    </location>
</feature>
<feature type="transmembrane region" description="Helical" evidence="1 3">
    <location>
        <begin position="1031"/>
        <end position="1051"/>
    </location>
</feature>
<feature type="topological domain" description="Cytoplasmic" evidence="6">
    <location>
        <begin position="1052"/>
        <end position="1327"/>
    </location>
</feature>
<feature type="domain" description="ABC transmembrane type-1 1" evidence="3">
    <location>
        <begin position="106"/>
        <end position="394"/>
    </location>
</feature>
<feature type="domain" description="ABC transporter 1" evidence="2">
    <location>
        <begin position="429"/>
        <end position="665"/>
    </location>
</feature>
<feature type="domain" description="ABC transmembrane type-1 2" evidence="3">
    <location>
        <begin position="766"/>
        <end position="1053"/>
    </location>
</feature>
<feature type="domain" description="ABC transporter 2" evidence="2">
    <location>
        <begin position="1086"/>
        <end position="1322"/>
    </location>
</feature>
<feature type="region of interest" description="Disordered" evidence="4">
    <location>
        <begin position="1"/>
        <end position="23"/>
    </location>
</feature>
<feature type="region of interest" description="Disordered" evidence="4">
    <location>
        <begin position="671"/>
        <end position="721"/>
    </location>
</feature>
<feature type="compositionally biased region" description="Basic and acidic residues" evidence="4">
    <location>
        <begin position="1"/>
        <end position="17"/>
    </location>
</feature>
<feature type="compositionally biased region" description="Acidic residues" evidence="4">
    <location>
        <begin position="673"/>
        <end position="686"/>
    </location>
</feature>
<feature type="compositionally biased region" description="Low complexity" evidence="4">
    <location>
        <begin position="694"/>
        <end position="704"/>
    </location>
</feature>
<feature type="compositionally biased region" description="Polar residues" evidence="4">
    <location>
        <begin position="711"/>
        <end position="721"/>
    </location>
</feature>
<feature type="binding site" evidence="2">
    <location>
        <begin position="464"/>
        <end position="471"/>
    </location>
    <ligand>
        <name>ATP</name>
        <dbReference type="ChEBI" id="CHEBI:30616"/>
    </ligand>
</feature>
<feature type="binding site" evidence="2">
    <location>
        <begin position="1121"/>
        <end position="1128"/>
    </location>
    <ligand>
        <name>ATP</name>
        <dbReference type="ChEBI" id="CHEBI:30616"/>
    </ligand>
</feature>
<organism evidence="8">
    <name type="scientific">Caenorhabditis elegans</name>
    <dbReference type="NCBI Taxonomy" id="6239"/>
    <lineage>
        <taxon>Eukaryota</taxon>
        <taxon>Metazoa</taxon>
        <taxon>Ecdysozoa</taxon>
        <taxon>Nematoda</taxon>
        <taxon>Chromadorea</taxon>
        <taxon>Rhabditida</taxon>
        <taxon>Rhabditina</taxon>
        <taxon>Rhabditomorpha</taxon>
        <taxon>Rhabditoidea</taxon>
        <taxon>Rhabditidae</taxon>
        <taxon>Peloderinae</taxon>
        <taxon>Caenorhabditis</taxon>
    </lineage>
</organism>